<sequence>MDYKTAGVDVQAGRAFIERIRSSVEATHRPEVIGGLGGFGGLMRLPAGLNKPLLVAGTDGVGTKLELAQQHQAHYGVGLDLVGMCVNDVITSGAEPLFFLDYIATGALSPEAMAQVVEGIAEGCRRSGCALLGGETAEMPGFYDPGCYDLAGFCVAVVEEDEMIDGRKIKPGDQIIGVASSGVHSNGFSLVRKVLALTEANKNTLFGCDNKPLIETLLTPTTLYGQLVKNLLEAKVPLHGMAHITGGGLPENLPRCCPKDLVTVIDPSSWTRPELFQWLQDAGQIPEHDLWHTFNLGVGFCLVVAEEVVSDVLQVCNEQALQAWPIGQVETASPSTGERLRGLPS</sequence>
<feature type="chain" id="PRO_0000148231" description="Phosphoribosylformylglycinamidine cyclo-ligase">
    <location>
        <begin position="1"/>
        <end position="345"/>
    </location>
</feature>
<proteinExistence type="inferred from homology"/>
<organism>
    <name type="scientific">Prochlorococcus marinus (strain MIT 9313)</name>
    <dbReference type="NCBI Taxonomy" id="74547"/>
    <lineage>
        <taxon>Bacteria</taxon>
        <taxon>Bacillati</taxon>
        <taxon>Cyanobacteriota</taxon>
        <taxon>Cyanophyceae</taxon>
        <taxon>Synechococcales</taxon>
        <taxon>Prochlorococcaceae</taxon>
        <taxon>Prochlorococcus</taxon>
    </lineage>
</organism>
<protein>
    <recommendedName>
        <fullName evidence="1">Phosphoribosylformylglycinamidine cyclo-ligase</fullName>
        <ecNumber evidence="1">6.3.3.1</ecNumber>
    </recommendedName>
    <alternativeName>
        <fullName evidence="1">AIR synthase</fullName>
    </alternativeName>
    <alternativeName>
        <fullName evidence="1">AIRS</fullName>
    </alternativeName>
    <alternativeName>
        <fullName evidence="1">Phosphoribosyl-aminoimidazole synthetase</fullName>
    </alternativeName>
</protein>
<keyword id="KW-0067">ATP-binding</keyword>
<keyword id="KW-0963">Cytoplasm</keyword>
<keyword id="KW-0436">Ligase</keyword>
<keyword id="KW-0547">Nucleotide-binding</keyword>
<keyword id="KW-0658">Purine biosynthesis</keyword>
<keyword id="KW-1185">Reference proteome</keyword>
<name>PUR5_PROMM</name>
<comment type="catalytic activity">
    <reaction evidence="1">
        <text>2-formamido-N(1)-(5-O-phospho-beta-D-ribosyl)acetamidine + ATP = 5-amino-1-(5-phospho-beta-D-ribosyl)imidazole + ADP + phosphate + H(+)</text>
        <dbReference type="Rhea" id="RHEA:23032"/>
        <dbReference type="ChEBI" id="CHEBI:15378"/>
        <dbReference type="ChEBI" id="CHEBI:30616"/>
        <dbReference type="ChEBI" id="CHEBI:43474"/>
        <dbReference type="ChEBI" id="CHEBI:137981"/>
        <dbReference type="ChEBI" id="CHEBI:147287"/>
        <dbReference type="ChEBI" id="CHEBI:456216"/>
        <dbReference type="EC" id="6.3.3.1"/>
    </reaction>
</comment>
<comment type="pathway">
    <text evidence="1">Purine metabolism; IMP biosynthesis via de novo pathway; 5-amino-1-(5-phospho-D-ribosyl)imidazole from N(2)-formyl-N(1)-(5-phospho-D-ribosyl)glycinamide: step 2/2.</text>
</comment>
<comment type="subcellular location">
    <subcellularLocation>
        <location evidence="1">Cytoplasm</location>
    </subcellularLocation>
</comment>
<comment type="similarity">
    <text evidence="1">Belongs to the AIR synthase family.</text>
</comment>
<dbReference type="EC" id="6.3.3.1" evidence="1"/>
<dbReference type="EMBL" id="BX548175">
    <property type="protein sequence ID" value="CAE21866.1"/>
    <property type="molecule type" value="Genomic_DNA"/>
</dbReference>
<dbReference type="RefSeq" id="WP_011131058.1">
    <property type="nucleotide sequence ID" value="NC_005071.1"/>
</dbReference>
<dbReference type="SMR" id="Q7V581"/>
<dbReference type="KEGG" id="pmt:PMT_1691"/>
<dbReference type="eggNOG" id="COG0150">
    <property type="taxonomic scope" value="Bacteria"/>
</dbReference>
<dbReference type="HOGENOM" id="CLU_047116_0_0_3"/>
<dbReference type="OrthoDB" id="9802507at2"/>
<dbReference type="UniPathway" id="UPA00074">
    <property type="reaction ID" value="UER00129"/>
</dbReference>
<dbReference type="Proteomes" id="UP000001423">
    <property type="component" value="Chromosome"/>
</dbReference>
<dbReference type="GO" id="GO:0005829">
    <property type="term" value="C:cytosol"/>
    <property type="evidence" value="ECO:0007669"/>
    <property type="project" value="TreeGrafter"/>
</dbReference>
<dbReference type="GO" id="GO:0005524">
    <property type="term" value="F:ATP binding"/>
    <property type="evidence" value="ECO:0007669"/>
    <property type="project" value="UniProtKB-KW"/>
</dbReference>
<dbReference type="GO" id="GO:0004637">
    <property type="term" value="F:phosphoribosylamine-glycine ligase activity"/>
    <property type="evidence" value="ECO:0007669"/>
    <property type="project" value="TreeGrafter"/>
</dbReference>
<dbReference type="GO" id="GO:0004641">
    <property type="term" value="F:phosphoribosylformylglycinamidine cyclo-ligase activity"/>
    <property type="evidence" value="ECO:0007669"/>
    <property type="project" value="UniProtKB-UniRule"/>
</dbReference>
<dbReference type="GO" id="GO:0006189">
    <property type="term" value="P:'de novo' IMP biosynthetic process"/>
    <property type="evidence" value="ECO:0007669"/>
    <property type="project" value="UniProtKB-UniRule"/>
</dbReference>
<dbReference type="GO" id="GO:0046084">
    <property type="term" value="P:adenine biosynthetic process"/>
    <property type="evidence" value="ECO:0007669"/>
    <property type="project" value="TreeGrafter"/>
</dbReference>
<dbReference type="CDD" id="cd02196">
    <property type="entry name" value="PurM"/>
    <property type="match status" value="1"/>
</dbReference>
<dbReference type="FunFam" id="3.30.1330.10:FF:000001">
    <property type="entry name" value="Phosphoribosylformylglycinamidine cyclo-ligase"/>
    <property type="match status" value="1"/>
</dbReference>
<dbReference type="FunFam" id="3.90.650.10:FF:000011">
    <property type="entry name" value="Phosphoribosylformylglycinamidine cyclo-ligase"/>
    <property type="match status" value="1"/>
</dbReference>
<dbReference type="Gene3D" id="3.90.650.10">
    <property type="entry name" value="PurM-like C-terminal domain"/>
    <property type="match status" value="1"/>
</dbReference>
<dbReference type="Gene3D" id="3.30.1330.10">
    <property type="entry name" value="PurM-like, N-terminal domain"/>
    <property type="match status" value="1"/>
</dbReference>
<dbReference type="HAMAP" id="MF_00741">
    <property type="entry name" value="AIRS"/>
    <property type="match status" value="1"/>
</dbReference>
<dbReference type="InterPro" id="IPR010918">
    <property type="entry name" value="PurM-like_C_dom"/>
</dbReference>
<dbReference type="InterPro" id="IPR036676">
    <property type="entry name" value="PurM-like_C_sf"/>
</dbReference>
<dbReference type="InterPro" id="IPR016188">
    <property type="entry name" value="PurM-like_N"/>
</dbReference>
<dbReference type="InterPro" id="IPR036921">
    <property type="entry name" value="PurM-like_N_sf"/>
</dbReference>
<dbReference type="InterPro" id="IPR004733">
    <property type="entry name" value="PurM_cligase"/>
</dbReference>
<dbReference type="NCBIfam" id="TIGR00878">
    <property type="entry name" value="purM"/>
    <property type="match status" value="1"/>
</dbReference>
<dbReference type="PANTHER" id="PTHR10520:SF12">
    <property type="entry name" value="TRIFUNCTIONAL PURINE BIOSYNTHETIC PROTEIN ADENOSINE-3"/>
    <property type="match status" value="1"/>
</dbReference>
<dbReference type="PANTHER" id="PTHR10520">
    <property type="entry name" value="TRIFUNCTIONAL PURINE BIOSYNTHETIC PROTEIN ADENOSINE-3-RELATED"/>
    <property type="match status" value="1"/>
</dbReference>
<dbReference type="Pfam" id="PF00586">
    <property type="entry name" value="AIRS"/>
    <property type="match status" value="1"/>
</dbReference>
<dbReference type="Pfam" id="PF02769">
    <property type="entry name" value="AIRS_C"/>
    <property type="match status" value="1"/>
</dbReference>
<dbReference type="SUPFAM" id="SSF56042">
    <property type="entry name" value="PurM C-terminal domain-like"/>
    <property type="match status" value="1"/>
</dbReference>
<dbReference type="SUPFAM" id="SSF55326">
    <property type="entry name" value="PurM N-terminal domain-like"/>
    <property type="match status" value="1"/>
</dbReference>
<accession>Q7V581</accession>
<reference key="1">
    <citation type="journal article" date="2003" name="Nature">
        <title>Genome divergence in two Prochlorococcus ecotypes reflects oceanic niche differentiation.</title>
        <authorList>
            <person name="Rocap G."/>
            <person name="Larimer F.W."/>
            <person name="Lamerdin J.E."/>
            <person name="Malfatti S."/>
            <person name="Chain P."/>
            <person name="Ahlgren N.A."/>
            <person name="Arellano A."/>
            <person name="Coleman M."/>
            <person name="Hauser L."/>
            <person name="Hess W.R."/>
            <person name="Johnson Z.I."/>
            <person name="Land M.L."/>
            <person name="Lindell D."/>
            <person name="Post A.F."/>
            <person name="Regala W."/>
            <person name="Shah M."/>
            <person name="Shaw S.L."/>
            <person name="Steglich C."/>
            <person name="Sullivan M.B."/>
            <person name="Ting C.S."/>
            <person name="Tolonen A."/>
            <person name="Webb E.A."/>
            <person name="Zinser E.R."/>
            <person name="Chisholm S.W."/>
        </authorList>
    </citation>
    <scope>NUCLEOTIDE SEQUENCE [LARGE SCALE GENOMIC DNA]</scope>
    <source>
        <strain>MIT 9313</strain>
    </source>
</reference>
<gene>
    <name evidence="1" type="primary">purM</name>
    <name type="ordered locus">PMT_1691</name>
</gene>
<evidence type="ECO:0000255" key="1">
    <source>
        <dbReference type="HAMAP-Rule" id="MF_00741"/>
    </source>
</evidence>